<name>AC110_NPVAC</name>
<comment type="function">
    <text evidence="1">Plays an essential role in the process of oral infection. May participate in the crossing of occlusion-derived virions through the host peritrophic membrane during oral infection.</text>
</comment>
<accession>P41663</accession>
<sequence length="56" mass="6799">MKYFLSATFLIIVFMYLMYFCISIVVNNARVQQDLFYHYNYVPDTLLNTVRVHKLK</sequence>
<organism>
    <name type="scientific">Autographa californica nuclear polyhedrosis virus</name>
    <name type="common">AcMNPV</name>
    <dbReference type="NCBI Taxonomy" id="46015"/>
    <lineage>
        <taxon>Viruses</taxon>
        <taxon>Viruses incertae sedis</taxon>
        <taxon>Naldaviricetes</taxon>
        <taxon>Lefavirales</taxon>
        <taxon>Baculoviridae</taxon>
        <taxon>Alphabaculovirus</taxon>
        <taxon>Alphabaculovirus aucalifornicae</taxon>
    </lineage>
</organism>
<dbReference type="EMBL" id="L22858">
    <property type="protein sequence ID" value="AAA66740.1"/>
    <property type="molecule type" value="Genomic_DNA"/>
</dbReference>
<dbReference type="PIR" id="G72863">
    <property type="entry name" value="G72863"/>
</dbReference>
<dbReference type="RefSeq" id="NP_054140.1">
    <property type="nucleotide sequence ID" value="NC_001623.1"/>
</dbReference>
<dbReference type="SMR" id="P41663"/>
<dbReference type="GeneID" id="1403943"/>
<dbReference type="KEGG" id="vg:1403943"/>
<dbReference type="OrthoDB" id="25768at10239"/>
<dbReference type="Proteomes" id="UP000008292">
    <property type="component" value="Segment"/>
</dbReference>
<dbReference type="InterPro" id="IPR009903">
    <property type="entry name" value="AcMNPV_AC110"/>
</dbReference>
<dbReference type="Pfam" id="PF07280">
    <property type="entry name" value="Ac110_PIF"/>
    <property type="match status" value="1"/>
</dbReference>
<feature type="chain" id="PRO_0000133045" description="Per os infectivity factor AC110">
    <location>
        <begin position="1"/>
        <end position="56"/>
    </location>
</feature>
<evidence type="ECO:0000269" key="1">
    <source>
    </source>
</evidence>
<protein>
    <recommendedName>
        <fullName>Per os infectivity factor AC110</fullName>
    </recommendedName>
</protein>
<reference key="1">
    <citation type="journal article" date="1994" name="Virology">
        <title>The complete DNA sequence of Autographa californica nuclear polyhedrosis virus.</title>
        <authorList>
            <person name="Ayres M.D."/>
            <person name="Howard S.C."/>
            <person name="Kuzio J."/>
            <person name="Lopez-Ferber M."/>
            <person name="Possee R.D."/>
        </authorList>
    </citation>
    <scope>NUCLEOTIDE SEQUENCE [LARGE SCALE GENOMIC DNA]</scope>
    <source>
        <strain>C6</strain>
    </source>
</reference>
<reference key="2">
    <citation type="journal article" date="2016" name="Virus Res.">
        <title>The Autographa californica multiple nucleopolyhedrovirus ac110 gene encodes a new per os infectivity factor.</title>
        <authorList>
            <person name="Jiantao L."/>
            <person name="Zhu L."/>
            <person name="Zhang S."/>
            <person name="Deng Z."/>
            <person name="Huang Z."/>
            <person name="Yuan M."/>
            <person name="Wu W."/>
            <person name="Yang K."/>
        </authorList>
    </citation>
    <scope>FUNCTION</scope>
</reference>
<organismHost>
    <name type="scientific">Lepidoptera</name>
    <name type="common">butterflies and moths</name>
    <dbReference type="NCBI Taxonomy" id="7088"/>
</organismHost>
<keyword id="KW-1185">Reference proteome</keyword>
<proteinExistence type="predicted"/>